<comment type="function">
    <text evidence="1">Specifically methylates the N1 position of guanosine-37 in various cytoplasmic and mitochondrial tRNAs. Methylation is not dependent on the nature of the nucleoside 5' of the target nucleoside. This is the first step in the biosynthesis of wybutosine (yW), a modified base adjacent to the anticodon of tRNAs and required for accurate decoding.</text>
</comment>
<comment type="catalytic activity">
    <reaction evidence="1">
        <text>guanosine(37) in tRNA + S-adenosyl-L-methionine = N(1)-methylguanosine(37) in tRNA + S-adenosyl-L-homocysteine + H(+)</text>
        <dbReference type="Rhea" id="RHEA:36899"/>
        <dbReference type="Rhea" id="RHEA-COMP:10145"/>
        <dbReference type="Rhea" id="RHEA-COMP:10147"/>
        <dbReference type="ChEBI" id="CHEBI:15378"/>
        <dbReference type="ChEBI" id="CHEBI:57856"/>
        <dbReference type="ChEBI" id="CHEBI:59789"/>
        <dbReference type="ChEBI" id="CHEBI:73542"/>
        <dbReference type="ChEBI" id="CHEBI:74269"/>
        <dbReference type="EC" id="2.1.1.228"/>
    </reaction>
</comment>
<comment type="subunit">
    <text evidence="1">Monomer.</text>
</comment>
<comment type="subcellular location">
    <subcellularLocation>
        <location evidence="1">Mitochondrion matrix</location>
    </subcellularLocation>
    <subcellularLocation>
        <location evidence="1">Nucleus</location>
    </subcellularLocation>
    <subcellularLocation>
        <location evidence="1">Cytoplasm</location>
    </subcellularLocation>
    <text evidence="1">Predominantly in the mitochondria and in the nucleus.</text>
</comment>
<comment type="similarity">
    <text evidence="2">Belongs to the class I-like SAM-binding methyltransferase superfamily. TRM5/TYW2 family.</text>
</comment>
<sequence length="457" mass="52203">MTTRHLYLDTSPPAYTGSRTELDKSAFHKTLPVLAVRVRPEKVGKFLKGDAMKRALLDIPKVRTVVSDPKEEGNRLVLLRMPNEGDIPPEALELIKTESNGLTEFNVNLDYNYWTADEILQSFLPEELREGAPSGFAMVGHIAHLNLNEEYLPYKYIIGQLILEKNNRVRTVVNKINSIDTQFRFFKMELLAGEPDYVVEHHESDCRFMFDFTKVYWNSRLHTEHDRLIQVFQPEEVVADVFAGVGPFAIPAGKKGCGVLANDLNPESYKYLAINAKNNRVDDTVKAFCEDGREFIQKSVSRLWEEPLPAYTGPKQSRVQEEKERRRLQRLKAEGQTVPIPPSEKQHGRRRISHFVMNLPDSAISFLDAFRGLLSGAEPALREQYSTMPMVHCHCFTREVDSRVNAEGDIRKRVEEKLGGALTSETSFHFVRSVAPNKDMYCISFRLPPEVAFGERM</sequence>
<accession>A8N339</accession>
<name>TRM5_COPC7</name>
<organism>
    <name type="scientific">Coprinopsis cinerea (strain Okayama-7 / 130 / ATCC MYA-4618 / FGSC 9003)</name>
    <name type="common">Inky cap fungus</name>
    <name type="synonym">Hormographiella aspergillata</name>
    <dbReference type="NCBI Taxonomy" id="240176"/>
    <lineage>
        <taxon>Eukaryota</taxon>
        <taxon>Fungi</taxon>
        <taxon>Dikarya</taxon>
        <taxon>Basidiomycota</taxon>
        <taxon>Agaricomycotina</taxon>
        <taxon>Agaricomycetes</taxon>
        <taxon>Agaricomycetidae</taxon>
        <taxon>Agaricales</taxon>
        <taxon>Agaricineae</taxon>
        <taxon>Psathyrellaceae</taxon>
        <taxon>Coprinopsis</taxon>
    </lineage>
</organism>
<evidence type="ECO:0000255" key="1">
    <source>
        <dbReference type="HAMAP-Rule" id="MF_03152"/>
    </source>
</evidence>
<evidence type="ECO:0000305" key="2"/>
<reference key="1">
    <citation type="journal article" date="2010" name="Proc. Natl. Acad. Sci. U.S.A.">
        <title>Insights into evolution of multicellular fungi from the assembled chromosomes of the mushroom Coprinopsis cinerea (Coprinus cinereus).</title>
        <authorList>
            <person name="Stajich J.E."/>
            <person name="Wilke S.K."/>
            <person name="Ahren D."/>
            <person name="Au C.H."/>
            <person name="Birren B.W."/>
            <person name="Borodovsky M."/>
            <person name="Burns C."/>
            <person name="Canbaeck B."/>
            <person name="Casselton L.A."/>
            <person name="Cheng C.K."/>
            <person name="Deng J."/>
            <person name="Dietrich F.S."/>
            <person name="Fargo D.C."/>
            <person name="Farman M.L."/>
            <person name="Gathman A.C."/>
            <person name="Goldberg J."/>
            <person name="Guigo R."/>
            <person name="Hoegger P.J."/>
            <person name="Hooker J.B."/>
            <person name="Huggins A."/>
            <person name="James T.Y."/>
            <person name="Kamada T."/>
            <person name="Kilaru S."/>
            <person name="Kodira C."/>
            <person name="Kuees U."/>
            <person name="Kupfer D."/>
            <person name="Kwan H.S."/>
            <person name="Lomsadze A."/>
            <person name="Li W."/>
            <person name="Lilly W.W."/>
            <person name="Ma L.-J."/>
            <person name="Mackey A.J."/>
            <person name="Manning G."/>
            <person name="Martin F."/>
            <person name="Muraguchi H."/>
            <person name="Natvig D.O."/>
            <person name="Palmerini H."/>
            <person name="Ramesh M.A."/>
            <person name="Rehmeyer C.J."/>
            <person name="Roe B.A."/>
            <person name="Shenoy N."/>
            <person name="Stanke M."/>
            <person name="Ter-Hovhannisyan V."/>
            <person name="Tunlid A."/>
            <person name="Velagapudi R."/>
            <person name="Vision T.J."/>
            <person name="Zeng Q."/>
            <person name="Zolan M.E."/>
            <person name="Pukkila P.J."/>
        </authorList>
    </citation>
    <scope>NUCLEOTIDE SEQUENCE [LARGE SCALE GENOMIC DNA]</scope>
    <source>
        <strain>Okayama-7 / 130 / ATCC MYA-4618 / FGSC 9003</strain>
    </source>
</reference>
<protein>
    <recommendedName>
        <fullName evidence="1">tRNA (guanine(37)-N(1))-methyltransferase</fullName>
        <ecNumber evidence="1">2.1.1.228</ecNumber>
    </recommendedName>
    <alternativeName>
        <fullName evidence="1">M1G-methyltransferase</fullName>
    </alternativeName>
    <alternativeName>
        <fullName evidence="1">tRNA [GM37] methyltransferase</fullName>
    </alternativeName>
    <alternativeName>
        <fullName evidence="1">tRNA methyltransferase 5</fullName>
    </alternativeName>
</protein>
<feature type="chain" id="PRO_0000414163" description="tRNA (guanine(37)-N(1))-methyltransferase">
    <location>
        <begin position="1"/>
        <end position="457"/>
    </location>
</feature>
<feature type="binding site" evidence="1">
    <location>
        <position position="225"/>
    </location>
    <ligand>
        <name>S-adenosyl-L-methionine</name>
        <dbReference type="ChEBI" id="CHEBI:59789"/>
    </ligand>
</feature>
<feature type="binding site" evidence="1">
    <location>
        <begin position="263"/>
        <end position="264"/>
    </location>
    <ligand>
        <name>S-adenosyl-L-methionine</name>
        <dbReference type="ChEBI" id="CHEBI:59789"/>
    </ligand>
</feature>
<feature type="binding site" evidence="1">
    <location>
        <begin position="291"/>
        <end position="292"/>
    </location>
    <ligand>
        <name>S-adenosyl-L-methionine</name>
        <dbReference type="ChEBI" id="CHEBI:59789"/>
    </ligand>
</feature>
<feature type="binding site" evidence="1">
    <location>
        <position position="358"/>
    </location>
    <ligand>
        <name>S-adenosyl-L-methionine</name>
        <dbReference type="ChEBI" id="CHEBI:59789"/>
    </ligand>
</feature>
<gene>
    <name evidence="1" type="primary">TRM5</name>
    <name type="ORF">CC1G_06548</name>
</gene>
<dbReference type="EC" id="2.1.1.228" evidence="1"/>
<dbReference type="EMBL" id="AACS02000001">
    <property type="protein sequence ID" value="EAU92537.2"/>
    <property type="molecule type" value="Genomic_DNA"/>
</dbReference>
<dbReference type="RefSeq" id="XP_001829211.2">
    <property type="nucleotide sequence ID" value="XM_001829159.2"/>
</dbReference>
<dbReference type="SMR" id="A8N339"/>
<dbReference type="FunCoup" id="A8N339">
    <property type="interactions" value="365"/>
</dbReference>
<dbReference type="GeneID" id="6005629"/>
<dbReference type="KEGG" id="cci:CC1G_06548"/>
<dbReference type="VEuPathDB" id="FungiDB:CC1G_06548"/>
<dbReference type="eggNOG" id="KOG2078">
    <property type="taxonomic scope" value="Eukaryota"/>
</dbReference>
<dbReference type="HOGENOM" id="CLU_022610_2_2_1"/>
<dbReference type="InParanoid" id="A8N339"/>
<dbReference type="OMA" id="VGSHSQF"/>
<dbReference type="OrthoDB" id="408788at2759"/>
<dbReference type="Proteomes" id="UP000001861">
    <property type="component" value="Unassembled WGS sequence"/>
</dbReference>
<dbReference type="GO" id="GO:0005759">
    <property type="term" value="C:mitochondrial matrix"/>
    <property type="evidence" value="ECO:0007669"/>
    <property type="project" value="UniProtKB-SubCell"/>
</dbReference>
<dbReference type="GO" id="GO:0005634">
    <property type="term" value="C:nucleus"/>
    <property type="evidence" value="ECO:0007669"/>
    <property type="project" value="UniProtKB-SubCell"/>
</dbReference>
<dbReference type="GO" id="GO:0052906">
    <property type="term" value="F:tRNA (guanine(37)-N1)-methyltransferase activity"/>
    <property type="evidence" value="ECO:0007669"/>
    <property type="project" value="UniProtKB-UniRule"/>
</dbReference>
<dbReference type="GO" id="GO:0070901">
    <property type="term" value="P:mitochondrial tRNA methylation"/>
    <property type="evidence" value="ECO:0007669"/>
    <property type="project" value="TreeGrafter"/>
</dbReference>
<dbReference type="GO" id="GO:0002939">
    <property type="term" value="P:tRNA N1-guanine methylation"/>
    <property type="evidence" value="ECO:0007669"/>
    <property type="project" value="TreeGrafter"/>
</dbReference>
<dbReference type="CDD" id="cd02440">
    <property type="entry name" value="AdoMet_MTases"/>
    <property type="match status" value="1"/>
</dbReference>
<dbReference type="FunFam" id="3.30.300.110:FF:000001">
    <property type="entry name" value="tRNA (guanine(37)-N1)-methyltransferase"/>
    <property type="match status" value="1"/>
</dbReference>
<dbReference type="Gene3D" id="3.30.300.110">
    <property type="entry name" value="Met-10+ protein-like domains"/>
    <property type="match status" value="1"/>
</dbReference>
<dbReference type="Gene3D" id="3.40.50.150">
    <property type="entry name" value="Vaccinia Virus protein VP39"/>
    <property type="match status" value="1"/>
</dbReference>
<dbReference type="HAMAP" id="MF_03152">
    <property type="entry name" value="TRM5"/>
    <property type="match status" value="1"/>
</dbReference>
<dbReference type="InterPro" id="IPR030382">
    <property type="entry name" value="MeTrfase_TRM5/TYW2"/>
</dbReference>
<dbReference type="InterPro" id="IPR029063">
    <property type="entry name" value="SAM-dependent_MTases_sf"/>
</dbReference>
<dbReference type="InterPro" id="IPR056743">
    <property type="entry name" value="TRM5-TYW2-like_MTfase"/>
</dbReference>
<dbReference type="InterPro" id="IPR056744">
    <property type="entry name" value="TRM5/TYW2-like_N"/>
</dbReference>
<dbReference type="InterPro" id="IPR025792">
    <property type="entry name" value="tRNA_Gua_MeTrfase_euk"/>
</dbReference>
<dbReference type="PANTHER" id="PTHR23245:SF36">
    <property type="entry name" value="TRNA (GUANINE(37)-N1)-METHYLTRANSFERASE"/>
    <property type="match status" value="1"/>
</dbReference>
<dbReference type="PANTHER" id="PTHR23245">
    <property type="entry name" value="TRNA METHYLTRANSFERASE"/>
    <property type="match status" value="1"/>
</dbReference>
<dbReference type="Pfam" id="PF02475">
    <property type="entry name" value="TRM5-TYW2_MTfase"/>
    <property type="match status" value="1"/>
</dbReference>
<dbReference type="Pfam" id="PF25133">
    <property type="entry name" value="TYW2_N_2"/>
    <property type="match status" value="1"/>
</dbReference>
<dbReference type="SUPFAM" id="SSF53335">
    <property type="entry name" value="S-adenosyl-L-methionine-dependent methyltransferases"/>
    <property type="match status" value="1"/>
</dbReference>
<dbReference type="PROSITE" id="PS51684">
    <property type="entry name" value="SAM_MT_TRM5_TYW2"/>
    <property type="match status" value="1"/>
</dbReference>
<keyword id="KW-0963">Cytoplasm</keyword>
<keyword id="KW-0489">Methyltransferase</keyword>
<keyword id="KW-0496">Mitochondrion</keyword>
<keyword id="KW-0539">Nucleus</keyword>
<keyword id="KW-1185">Reference proteome</keyword>
<keyword id="KW-0949">S-adenosyl-L-methionine</keyword>
<keyword id="KW-0808">Transferase</keyword>
<keyword id="KW-0819">tRNA processing</keyword>
<proteinExistence type="inferred from homology"/>